<keyword id="KW-0414">Isoprene biosynthesis</keyword>
<keyword id="KW-0464">Manganese</keyword>
<keyword id="KW-0479">Metal-binding</keyword>
<keyword id="KW-0521">NADP</keyword>
<keyword id="KW-0560">Oxidoreductase</keyword>
<keyword id="KW-1185">Reference proteome</keyword>
<organism>
    <name type="scientific">Citrifermentans bemidjiense (strain ATCC BAA-1014 / DSM 16622 / JCM 12645 / Bem)</name>
    <name type="common">Geobacter bemidjiensis</name>
    <dbReference type="NCBI Taxonomy" id="404380"/>
    <lineage>
        <taxon>Bacteria</taxon>
        <taxon>Pseudomonadati</taxon>
        <taxon>Thermodesulfobacteriota</taxon>
        <taxon>Desulfuromonadia</taxon>
        <taxon>Geobacterales</taxon>
        <taxon>Geobacteraceae</taxon>
        <taxon>Citrifermentans</taxon>
    </lineage>
</organism>
<comment type="function">
    <text evidence="1">Catalyzes the NADPH-dependent rearrangement and reduction of 1-deoxy-D-xylulose-5-phosphate (DXP) to 2-C-methyl-D-erythritol 4-phosphate (MEP).</text>
</comment>
<comment type="catalytic activity">
    <reaction evidence="1">
        <text>2-C-methyl-D-erythritol 4-phosphate + NADP(+) = 1-deoxy-D-xylulose 5-phosphate + NADPH + H(+)</text>
        <dbReference type="Rhea" id="RHEA:13717"/>
        <dbReference type="ChEBI" id="CHEBI:15378"/>
        <dbReference type="ChEBI" id="CHEBI:57783"/>
        <dbReference type="ChEBI" id="CHEBI:57792"/>
        <dbReference type="ChEBI" id="CHEBI:58262"/>
        <dbReference type="ChEBI" id="CHEBI:58349"/>
        <dbReference type="EC" id="1.1.1.267"/>
    </reaction>
    <physiologicalReaction direction="right-to-left" evidence="1">
        <dbReference type="Rhea" id="RHEA:13719"/>
    </physiologicalReaction>
</comment>
<comment type="cofactor">
    <cofactor evidence="1">
        <name>Mg(2+)</name>
        <dbReference type="ChEBI" id="CHEBI:18420"/>
    </cofactor>
    <cofactor evidence="1">
        <name>Mn(2+)</name>
        <dbReference type="ChEBI" id="CHEBI:29035"/>
    </cofactor>
</comment>
<comment type="pathway">
    <text evidence="1">Isoprenoid biosynthesis; isopentenyl diphosphate biosynthesis via DXP pathway; isopentenyl diphosphate from 1-deoxy-D-xylulose 5-phosphate: step 1/6.</text>
</comment>
<comment type="similarity">
    <text evidence="1">Belongs to the DXR family.</text>
</comment>
<feature type="chain" id="PRO_1000098497" description="1-deoxy-D-xylulose 5-phosphate reductoisomerase">
    <location>
        <begin position="1"/>
        <end position="385"/>
    </location>
</feature>
<feature type="binding site" evidence="1">
    <location>
        <position position="10"/>
    </location>
    <ligand>
        <name>NADPH</name>
        <dbReference type="ChEBI" id="CHEBI:57783"/>
    </ligand>
</feature>
<feature type="binding site" evidence="1">
    <location>
        <position position="11"/>
    </location>
    <ligand>
        <name>NADPH</name>
        <dbReference type="ChEBI" id="CHEBI:57783"/>
    </ligand>
</feature>
<feature type="binding site" evidence="1">
    <location>
        <position position="12"/>
    </location>
    <ligand>
        <name>NADPH</name>
        <dbReference type="ChEBI" id="CHEBI:57783"/>
    </ligand>
</feature>
<feature type="binding site" evidence="1">
    <location>
        <position position="13"/>
    </location>
    <ligand>
        <name>NADPH</name>
        <dbReference type="ChEBI" id="CHEBI:57783"/>
    </ligand>
</feature>
<feature type="binding site" evidence="1">
    <location>
        <position position="36"/>
    </location>
    <ligand>
        <name>NADPH</name>
        <dbReference type="ChEBI" id="CHEBI:57783"/>
    </ligand>
</feature>
<feature type="binding site" evidence="1">
    <location>
        <position position="38"/>
    </location>
    <ligand>
        <name>NADPH</name>
        <dbReference type="ChEBI" id="CHEBI:57783"/>
    </ligand>
</feature>
<feature type="binding site" evidence="1">
    <location>
        <position position="122"/>
    </location>
    <ligand>
        <name>NADPH</name>
        <dbReference type="ChEBI" id="CHEBI:57783"/>
    </ligand>
</feature>
<feature type="binding site" evidence="1">
    <location>
        <position position="123"/>
    </location>
    <ligand>
        <name>1-deoxy-D-xylulose 5-phosphate</name>
        <dbReference type="ChEBI" id="CHEBI:57792"/>
    </ligand>
</feature>
<feature type="binding site" evidence="1">
    <location>
        <position position="124"/>
    </location>
    <ligand>
        <name>NADPH</name>
        <dbReference type="ChEBI" id="CHEBI:57783"/>
    </ligand>
</feature>
<feature type="binding site" evidence="1">
    <location>
        <position position="148"/>
    </location>
    <ligand>
        <name>Mn(2+)</name>
        <dbReference type="ChEBI" id="CHEBI:29035"/>
    </ligand>
</feature>
<feature type="binding site" evidence="1">
    <location>
        <position position="149"/>
    </location>
    <ligand>
        <name>1-deoxy-D-xylulose 5-phosphate</name>
        <dbReference type="ChEBI" id="CHEBI:57792"/>
    </ligand>
</feature>
<feature type="binding site" evidence="1">
    <location>
        <position position="150"/>
    </location>
    <ligand>
        <name>1-deoxy-D-xylulose 5-phosphate</name>
        <dbReference type="ChEBI" id="CHEBI:57792"/>
    </ligand>
</feature>
<feature type="binding site" evidence="1">
    <location>
        <position position="150"/>
    </location>
    <ligand>
        <name>Mn(2+)</name>
        <dbReference type="ChEBI" id="CHEBI:29035"/>
    </ligand>
</feature>
<feature type="binding site" evidence="1">
    <location>
        <position position="174"/>
    </location>
    <ligand>
        <name>1-deoxy-D-xylulose 5-phosphate</name>
        <dbReference type="ChEBI" id="CHEBI:57792"/>
    </ligand>
</feature>
<feature type="binding site" evidence="1">
    <location>
        <position position="197"/>
    </location>
    <ligand>
        <name>1-deoxy-D-xylulose 5-phosphate</name>
        <dbReference type="ChEBI" id="CHEBI:57792"/>
    </ligand>
</feature>
<feature type="binding site" evidence="1">
    <location>
        <position position="203"/>
    </location>
    <ligand>
        <name>NADPH</name>
        <dbReference type="ChEBI" id="CHEBI:57783"/>
    </ligand>
</feature>
<feature type="binding site" evidence="1">
    <location>
        <position position="210"/>
    </location>
    <ligand>
        <name>1-deoxy-D-xylulose 5-phosphate</name>
        <dbReference type="ChEBI" id="CHEBI:57792"/>
    </ligand>
</feature>
<feature type="binding site" evidence="1">
    <location>
        <position position="215"/>
    </location>
    <ligand>
        <name>1-deoxy-D-xylulose 5-phosphate</name>
        <dbReference type="ChEBI" id="CHEBI:57792"/>
    </ligand>
</feature>
<feature type="binding site" evidence="1">
    <location>
        <position position="216"/>
    </location>
    <ligand>
        <name>1-deoxy-D-xylulose 5-phosphate</name>
        <dbReference type="ChEBI" id="CHEBI:57792"/>
    </ligand>
</feature>
<feature type="binding site" evidence="1">
    <location>
        <position position="219"/>
    </location>
    <ligand>
        <name>1-deoxy-D-xylulose 5-phosphate</name>
        <dbReference type="ChEBI" id="CHEBI:57792"/>
    </ligand>
</feature>
<feature type="binding site" evidence="1">
    <location>
        <position position="219"/>
    </location>
    <ligand>
        <name>Mn(2+)</name>
        <dbReference type="ChEBI" id="CHEBI:29035"/>
    </ligand>
</feature>
<gene>
    <name evidence="1" type="primary">dxr</name>
    <name type="ordered locus">Gbem_2750</name>
</gene>
<reference key="1">
    <citation type="submission" date="2008-07" db="EMBL/GenBank/DDBJ databases">
        <title>Complete sequence of Geobacter bemidjiensis BEM.</title>
        <authorList>
            <consortium name="US DOE Joint Genome Institute"/>
            <person name="Lucas S."/>
            <person name="Copeland A."/>
            <person name="Lapidus A."/>
            <person name="Glavina del Rio T."/>
            <person name="Dalin E."/>
            <person name="Tice H."/>
            <person name="Bruce D."/>
            <person name="Goodwin L."/>
            <person name="Pitluck S."/>
            <person name="Kiss H."/>
            <person name="Brettin T."/>
            <person name="Detter J.C."/>
            <person name="Han C."/>
            <person name="Kuske C.R."/>
            <person name="Schmutz J."/>
            <person name="Larimer F."/>
            <person name="Land M."/>
            <person name="Hauser L."/>
            <person name="Kyrpides N."/>
            <person name="Lykidis A."/>
            <person name="Lovley D."/>
            <person name="Richardson P."/>
        </authorList>
    </citation>
    <scope>NUCLEOTIDE SEQUENCE [LARGE SCALE GENOMIC DNA]</scope>
    <source>
        <strain>ATCC BAA-1014 / DSM 16622 / JCM 12645 / Bem</strain>
    </source>
</reference>
<dbReference type="EC" id="1.1.1.267" evidence="1"/>
<dbReference type="EMBL" id="CP001124">
    <property type="protein sequence ID" value="ACH39754.1"/>
    <property type="molecule type" value="Genomic_DNA"/>
</dbReference>
<dbReference type="RefSeq" id="WP_012531180.1">
    <property type="nucleotide sequence ID" value="NC_011146.1"/>
</dbReference>
<dbReference type="SMR" id="B5EHV5"/>
<dbReference type="STRING" id="404380.Gbem_2750"/>
<dbReference type="KEGG" id="gbm:Gbem_2750"/>
<dbReference type="eggNOG" id="COG0743">
    <property type="taxonomic scope" value="Bacteria"/>
</dbReference>
<dbReference type="HOGENOM" id="CLU_035714_4_0_7"/>
<dbReference type="OrthoDB" id="9806546at2"/>
<dbReference type="UniPathway" id="UPA00056">
    <property type="reaction ID" value="UER00092"/>
</dbReference>
<dbReference type="Proteomes" id="UP000008825">
    <property type="component" value="Chromosome"/>
</dbReference>
<dbReference type="GO" id="GO:0030604">
    <property type="term" value="F:1-deoxy-D-xylulose-5-phosphate reductoisomerase activity"/>
    <property type="evidence" value="ECO:0007669"/>
    <property type="project" value="UniProtKB-UniRule"/>
</dbReference>
<dbReference type="GO" id="GO:0030145">
    <property type="term" value="F:manganese ion binding"/>
    <property type="evidence" value="ECO:0007669"/>
    <property type="project" value="TreeGrafter"/>
</dbReference>
<dbReference type="GO" id="GO:0070402">
    <property type="term" value="F:NADPH binding"/>
    <property type="evidence" value="ECO:0007669"/>
    <property type="project" value="InterPro"/>
</dbReference>
<dbReference type="GO" id="GO:0051484">
    <property type="term" value="P:isopentenyl diphosphate biosynthetic process, methylerythritol 4-phosphate pathway involved in terpenoid biosynthetic process"/>
    <property type="evidence" value="ECO:0007669"/>
    <property type="project" value="TreeGrafter"/>
</dbReference>
<dbReference type="FunFam" id="3.40.50.720:FF:000045">
    <property type="entry name" value="1-deoxy-D-xylulose 5-phosphate reductoisomerase"/>
    <property type="match status" value="1"/>
</dbReference>
<dbReference type="Gene3D" id="1.10.1740.10">
    <property type="match status" value="1"/>
</dbReference>
<dbReference type="Gene3D" id="3.40.50.720">
    <property type="entry name" value="NAD(P)-binding Rossmann-like Domain"/>
    <property type="match status" value="1"/>
</dbReference>
<dbReference type="HAMAP" id="MF_00183">
    <property type="entry name" value="DXP_reductoisom"/>
    <property type="match status" value="1"/>
</dbReference>
<dbReference type="InterPro" id="IPR003821">
    <property type="entry name" value="DXP_reductoisomerase"/>
</dbReference>
<dbReference type="InterPro" id="IPR013644">
    <property type="entry name" value="DXP_reductoisomerase_C"/>
</dbReference>
<dbReference type="InterPro" id="IPR013512">
    <property type="entry name" value="DXP_reductoisomerase_N"/>
</dbReference>
<dbReference type="InterPro" id="IPR026877">
    <property type="entry name" value="DXPR_C"/>
</dbReference>
<dbReference type="InterPro" id="IPR036169">
    <property type="entry name" value="DXPR_C_sf"/>
</dbReference>
<dbReference type="InterPro" id="IPR036291">
    <property type="entry name" value="NAD(P)-bd_dom_sf"/>
</dbReference>
<dbReference type="NCBIfam" id="TIGR00243">
    <property type="entry name" value="Dxr"/>
    <property type="match status" value="1"/>
</dbReference>
<dbReference type="NCBIfam" id="NF009114">
    <property type="entry name" value="PRK12464.1"/>
    <property type="match status" value="1"/>
</dbReference>
<dbReference type="PANTHER" id="PTHR30525">
    <property type="entry name" value="1-DEOXY-D-XYLULOSE 5-PHOSPHATE REDUCTOISOMERASE"/>
    <property type="match status" value="1"/>
</dbReference>
<dbReference type="PANTHER" id="PTHR30525:SF0">
    <property type="entry name" value="1-DEOXY-D-XYLULOSE 5-PHOSPHATE REDUCTOISOMERASE, CHLOROPLASTIC"/>
    <property type="match status" value="1"/>
</dbReference>
<dbReference type="Pfam" id="PF08436">
    <property type="entry name" value="DXP_redisom_C"/>
    <property type="match status" value="1"/>
</dbReference>
<dbReference type="Pfam" id="PF02670">
    <property type="entry name" value="DXP_reductoisom"/>
    <property type="match status" value="1"/>
</dbReference>
<dbReference type="Pfam" id="PF13288">
    <property type="entry name" value="DXPR_C"/>
    <property type="match status" value="1"/>
</dbReference>
<dbReference type="PIRSF" id="PIRSF006205">
    <property type="entry name" value="Dxp_reductismrs"/>
    <property type="match status" value="1"/>
</dbReference>
<dbReference type="SUPFAM" id="SSF69055">
    <property type="entry name" value="1-deoxy-D-xylulose-5-phosphate reductoisomerase, C-terminal domain"/>
    <property type="match status" value="1"/>
</dbReference>
<dbReference type="SUPFAM" id="SSF55347">
    <property type="entry name" value="Glyceraldehyde-3-phosphate dehydrogenase-like, C-terminal domain"/>
    <property type="match status" value="1"/>
</dbReference>
<dbReference type="SUPFAM" id="SSF51735">
    <property type="entry name" value="NAD(P)-binding Rossmann-fold domains"/>
    <property type="match status" value="1"/>
</dbReference>
<proteinExistence type="inferred from homology"/>
<sequence length="385" mass="41021">MKNLTILGSTGSIGVSTLDVVKAYPDMFRVVALTAGNNLELLKTQIETFSPDLVSVLTAEKAQALSRSLTGKKPEIMHGVEGMIAAATASETTMVVAAIVGAAGLVPTTAAIMAGKDVALANKETLVTAGHLVMQMVREKKVNLYPVDSEHCAVFQSMAGHRSQDIARVILTASGGPFLNWGREKLQAATVADALNHPNWSMGRKITVDSATMMNKGLEVIEARWLFDIPVQRIGVNIHPQSIIHSMVEYVDGSVMAQLGTPDMKGPIAYALTYPGRVPSGVKALDLTALSGLTFFKPDTDRFPALQLAYRAADAGESMPAVMNAANEIAVEAFLGGRIGFMAIAEAIEKVMDLHEPHALASIEEVLEADRWGRRTAKEVLGVGC</sequence>
<protein>
    <recommendedName>
        <fullName evidence="1">1-deoxy-D-xylulose 5-phosphate reductoisomerase</fullName>
        <shortName evidence="1">DXP reductoisomerase</shortName>
        <ecNumber evidence="1">1.1.1.267</ecNumber>
    </recommendedName>
    <alternativeName>
        <fullName evidence="1">1-deoxyxylulose-5-phosphate reductoisomerase</fullName>
    </alternativeName>
    <alternativeName>
        <fullName evidence="1">2-C-methyl-D-erythritol 4-phosphate synthase</fullName>
    </alternativeName>
</protein>
<accession>B5EHV5</accession>
<evidence type="ECO:0000255" key="1">
    <source>
        <dbReference type="HAMAP-Rule" id="MF_00183"/>
    </source>
</evidence>
<name>DXR_CITBB</name>